<protein>
    <recommendedName>
        <fullName>Uncharacterized protein S183L</fullName>
        <shortName>pS183L</shortName>
    </recommendedName>
</protein>
<keyword id="KW-0426">Late protein</keyword>
<reference key="1">
    <citation type="journal article" date="1994" name="J. Gen. Virol.">
        <title>Nucleotide sequence of a 55 kbp region from the right end of the genome of a pathogenic African swine fever virus isolate (Malawi LIL20/1).</title>
        <authorList>
            <person name="Dixon L.K."/>
            <person name="Twigg S.R.F."/>
            <person name="Baylis S.A."/>
            <person name="Vydelingum S."/>
            <person name="Bristow C."/>
            <person name="Hammond J.M."/>
            <person name="Smith G.L."/>
        </authorList>
    </citation>
    <scope>NUCLEOTIDE SEQUENCE [GENOMIC DNA]</scope>
</reference>
<reference key="2">
    <citation type="submission" date="2003-03" db="EMBL/GenBank/DDBJ databases">
        <title>African swine fever virus genomes.</title>
        <authorList>
            <person name="Kutish G.F."/>
            <person name="Rock D.L."/>
        </authorList>
    </citation>
    <scope>NUCLEOTIDE SEQUENCE [LARGE SCALE GENOMIC DNA]</scope>
</reference>
<organismHost>
    <name type="scientific">Ornithodoros</name>
    <name type="common">relapsing fever ticks</name>
    <dbReference type="NCBI Taxonomy" id="6937"/>
</organismHost>
<organismHost>
    <name type="scientific">Phacochoerus aethiopicus</name>
    <name type="common">Warthog</name>
    <dbReference type="NCBI Taxonomy" id="85517"/>
</organismHost>
<organismHost>
    <name type="scientific">Phacochoerus africanus</name>
    <name type="common">Warthog</name>
    <dbReference type="NCBI Taxonomy" id="41426"/>
</organismHost>
<organismHost>
    <name type="scientific">Potamochoerus larvatus</name>
    <name type="common">Bushpig</name>
    <dbReference type="NCBI Taxonomy" id="273792"/>
</organismHost>
<organismHost>
    <name type="scientific">Sus scrofa</name>
    <name type="common">Pig</name>
    <dbReference type="NCBI Taxonomy" id="9823"/>
</organismHost>
<gene>
    <name type="ordered locus">Mal-118</name>
    <name type="ORF">i5L</name>
</gene>
<evidence type="ECO:0000305" key="1"/>
<comment type="induction">
    <text evidence="1">Expressed in the late phase of the viral replicative cycle.</text>
</comment>
<comment type="similarity">
    <text evidence="1">Belongs to the asfivirus S183L family.</text>
</comment>
<organism>
    <name type="scientific">African swine fever virus (isolate Tick/Malawi/Lil 20-1/1983)</name>
    <name type="common">ASFV</name>
    <dbReference type="NCBI Taxonomy" id="10500"/>
    <lineage>
        <taxon>Viruses</taxon>
        <taxon>Varidnaviria</taxon>
        <taxon>Bamfordvirae</taxon>
        <taxon>Nucleocytoviricota</taxon>
        <taxon>Pokkesviricetes</taxon>
        <taxon>Asfuvirales</taxon>
        <taxon>Asfarviridae</taxon>
        <taxon>Asfivirus</taxon>
        <taxon>African swine fever virus</taxon>
    </lineage>
</organism>
<proteinExistence type="inferred from homology"/>
<accession>Q65227</accession>
<name>VF183_ASFM2</name>
<feature type="chain" id="PRO_0000373569" description="Uncharacterized protein S183L">
    <location>
        <begin position="1"/>
        <end position="183"/>
    </location>
</feature>
<dbReference type="EMBL" id="X71982">
    <property type="protein sequence ID" value="CAA50818.1"/>
    <property type="molecule type" value="Genomic_DNA"/>
</dbReference>
<dbReference type="EMBL" id="AY261361">
    <property type="status" value="NOT_ANNOTATED_CDS"/>
    <property type="molecule type" value="Genomic_DNA"/>
</dbReference>
<dbReference type="Proteomes" id="UP000000860">
    <property type="component" value="Segment"/>
</dbReference>
<sequence>MSVVVGGVEYSLNNWARYEIKRRAAELESVNYYPHCEYIMPEDVVVSILGSKPNCPFLEALKRFHDFLKKQRIIFKEGYLVIPWMGAQEVADMIHHVENRINLGHLEDLAHMLKLITYHRSFDTSINQSFENLYAFKFPDANIETHELNFVRQLEKKMYGYILRLEKLQTVLTFYIEFLLKQI</sequence>